<sequence length="229" mass="25664">MYDVNEWKHVFKLDPNKDLPDEQLERLCESGTDAIVIGGSDNITEDNVLRLMSKVRRFLVPCVLEVSTIDSIVPGFDLYFIPSVLNSKKADWIVGMHHQAMKEYGELMSMEEIVTEGYCIVNPDCKAAALTEADTHIETEDILAYARVAEHLLHLPIFYLEYSGMLADIEMVEKTKAVLDKSVLFYGGGIKDAETAERFGRHADVIVVGNAVYEDFDQALKTVAAVKTK</sequence>
<proteinExistence type="inferred from homology"/>
<name>PCRB_BACVZ</name>
<reference key="1">
    <citation type="journal article" date="2007" name="Nat. Biotechnol.">
        <title>Comparative analysis of the complete genome sequence of the plant growth-promoting bacterium Bacillus amyloliquefaciens FZB42.</title>
        <authorList>
            <person name="Chen X.H."/>
            <person name="Koumoutsi A."/>
            <person name="Scholz R."/>
            <person name="Eisenreich A."/>
            <person name="Schneider K."/>
            <person name="Heinemeyer I."/>
            <person name="Morgenstern B."/>
            <person name="Voss B."/>
            <person name="Hess W.R."/>
            <person name="Reva O."/>
            <person name="Junge H."/>
            <person name="Voigt B."/>
            <person name="Jungblut P.R."/>
            <person name="Vater J."/>
            <person name="Suessmuth R."/>
            <person name="Liesegang H."/>
            <person name="Strittmatter A."/>
            <person name="Gottschalk G."/>
            <person name="Borriss R."/>
        </authorList>
    </citation>
    <scope>NUCLEOTIDE SEQUENCE [LARGE SCALE GENOMIC DNA]</scope>
    <source>
        <strain>DSM 23117 / BGSC 10A6 / LMG 26770 / FZB42</strain>
    </source>
</reference>
<accession>A7Z259</accession>
<gene>
    <name evidence="1" type="primary">pcrB</name>
    <name type="ordered locus">RBAM_007000</name>
</gene>
<evidence type="ECO:0000255" key="1">
    <source>
        <dbReference type="HAMAP-Rule" id="MF_00112"/>
    </source>
</evidence>
<feature type="chain" id="PRO_1000015164" description="Heptaprenylglyceryl phosphate synthase">
    <location>
        <begin position="1"/>
        <end position="229"/>
    </location>
</feature>
<feature type="binding site" evidence="1">
    <location>
        <position position="12"/>
    </location>
    <ligand>
        <name>sn-glycerol 1-phosphate</name>
        <dbReference type="ChEBI" id="CHEBI:57685"/>
    </ligand>
</feature>
<feature type="binding site" evidence="1">
    <location>
        <position position="14"/>
    </location>
    <ligand>
        <name>Mg(2+)</name>
        <dbReference type="ChEBI" id="CHEBI:18420"/>
    </ligand>
</feature>
<feature type="binding site" evidence="1">
    <location>
        <position position="40"/>
    </location>
    <ligand>
        <name>Mg(2+)</name>
        <dbReference type="ChEBI" id="CHEBI:18420"/>
    </ligand>
</feature>
<feature type="binding site" evidence="1">
    <location>
        <begin position="159"/>
        <end position="164"/>
    </location>
    <ligand>
        <name>sn-glycerol 1-phosphate</name>
        <dbReference type="ChEBI" id="CHEBI:57685"/>
    </ligand>
</feature>
<feature type="binding site" evidence="1">
    <location>
        <position position="189"/>
    </location>
    <ligand>
        <name>sn-glycerol 1-phosphate</name>
        <dbReference type="ChEBI" id="CHEBI:57685"/>
    </ligand>
</feature>
<feature type="binding site" evidence="1">
    <location>
        <begin position="209"/>
        <end position="210"/>
    </location>
    <ligand>
        <name>sn-glycerol 1-phosphate</name>
        <dbReference type="ChEBI" id="CHEBI:57685"/>
    </ligand>
</feature>
<comment type="function">
    <text evidence="1">Prenyltransferase that catalyzes in vivo the transfer of the heptaprenyl moiety of heptaprenyl pyrophosphate (HepPP; 35 carbon atoms) to the C3 hydroxyl of sn-glycerol-1-phosphate (G1P), producing heptaprenylglyceryl phosphate (HepGP). This reaction is an ether-bond-formation step in the biosynthesis of archaea-type G1P-based membrane lipids found in Bacillales.</text>
</comment>
<comment type="catalytic activity">
    <reaction evidence="1">
        <text>sn-glycerol 1-phosphate + all-trans-heptaprenyl diphosphate = 3-heptaprenyl-sn-glycero-1-phosphate + diphosphate</text>
        <dbReference type="Rhea" id="RHEA:33495"/>
        <dbReference type="ChEBI" id="CHEBI:33019"/>
        <dbReference type="ChEBI" id="CHEBI:57685"/>
        <dbReference type="ChEBI" id="CHEBI:58206"/>
        <dbReference type="ChEBI" id="CHEBI:64781"/>
        <dbReference type="EC" id="2.5.1.n9"/>
    </reaction>
</comment>
<comment type="cofactor">
    <cofactor evidence="1">
        <name>Mg(2+)</name>
        <dbReference type="ChEBI" id="CHEBI:18420"/>
    </cofactor>
</comment>
<comment type="pathway">
    <text evidence="1">Membrane lipid metabolism; glycerophospholipid metabolism.</text>
</comment>
<comment type="subunit">
    <text evidence="1">Homodimer.</text>
</comment>
<comment type="similarity">
    <text evidence="1">Belongs to the GGGP/HepGP synthase family. Group I subfamily.</text>
</comment>
<dbReference type="EC" id="2.5.1.n9" evidence="1"/>
<dbReference type="EMBL" id="CP000560">
    <property type="protein sequence ID" value="ABS73085.1"/>
    <property type="molecule type" value="Genomic_DNA"/>
</dbReference>
<dbReference type="RefSeq" id="WP_012117005.1">
    <property type="nucleotide sequence ID" value="NC_009725.2"/>
</dbReference>
<dbReference type="SMR" id="A7Z259"/>
<dbReference type="GeneID" id="93079835"/>
<dbReference type="KEGG" id="bay:RBAM_007000"/>
<dbReference type="HOGENOM" id="CLU_095211_0_0_9"/>
<dbReference type="UniPathway" id="UPA00940"/>
<dbReference type="Proteomes" id="UP000001120">
    <property type="component" value="Chromosome"/>
</dbReference>
<dbReference type="GO" id="GO:0120536">
    <property type="term" value="F:heptaprenylglyceryl phosphate synthase activity"/>
    <property type="evidence" value="ECO:0007669"/>
    <property type="project" value="RHEA"/>
</dbReference>
<dbReference type="GO" id="GO:0000287">
    <property type="term" value="F:magnesium ion binding"/>
    <property type="evidence" value="ECO:0007669"/>
    <property type="project" value="UniProtKB-UniRule"/>
</dbReference>
<dbReference type="GO" id="GO:0046474">
    <property type="term" value="P:glycerophospholipid biosynthetic process"/>
    <property type="evidence" value="ECO:0007669"/>
    <property type="project" value="UniProtKB-UniRule"/>
</dbReference>
<dbReference type="CDD" id="cd02812">
    <property type="entry name" value="PcrB_like"/>
    <property type="match status" value="1"/>
</dbReference>
<dbReference type="FunFam" id="3.20.20.390:FF:000001">
    <property type="entry name" value="Heptaprenylglyceryl phosphate synthase"/>
    <property type="match status" value="1"/>
</dbReference>
<dbReference type="Gene3D" id="3.20.20.390">
    <property type="entry name" value="FMN-linked oxidoreductases"/>
    <property type="match status" value="1"/>
</dbReference>
<dbReference type="HAMAP" id="MF_00112">
    <property type="entry name" value="GGGP_HepGP_synthase"/>
    <property type="match status" value="1"/>
</dbReference>
<dbReference type="InterPro" id="IPR039074">
    <property type="entry name" value="GGGP/HepGP_synthase_I"/>
</dbReference>
<dbReference type="InterPro" id="IPR038597">
    <property type="entry name" value="GGGP/HepGP_synthase_sf"/>
</dbReference>
<dbReference type="InterPro" id="IPR008205">
    <property type="entry name" value="GGGP_HepGP_synthase"/>
</dbReference>
<dbReference type="NCBIfam" id="TIGR01768">
    <property type="entry name" value="GGGP-family"/>
    <property type="match status" value="1"/>
</dbReference>
<dbReference type="NCBIfam" id="NF003197">
    <property type="entry name" value="PRK04169.1-1"/>
    <property type="match status" value="1"/>
</dbReference>
<dbReference type="NCBIfam" id="NF003199">
    <property type="entry name" value="PRK04169.1-3"/>
    <property type="match status" value="1"/>
</dbReference>
<dbReference type="PANTHER" id="PTHR40029">
    <property type="match status" value="1"/>
</dbReference>
<dbReference type="PANTHER" id="PTHR40029:SF2">
    <property type="entry name" value="HEPTAPRENYLGLYCERYL PHOSPHATE SYNTHASE"/>
    <property type="match status" value="1"/>
</dbReference>
<dbReference type="Pfam" id="PF01884">
    <property type="entry name" value="PcrB"/>
    <property type="match status" value="1"/>
</dbReference>
<dbReference type="SUPFAM" id="SSF51395">
    <property type="entry name" value="FMN-linked oxidoreductases"/>
    <property type="match status" value="1"/>
</dbReference>
<keyword id="KW-0444">Lipid biosynthesis</keyword>
<keyword id="KW-0443">Lipid metabolism</keyword>
<keyword id="KW-0460">Magnesium</keyword>
<keyword id="KW-0479">Metal-binding</keyword>
<keyword id="KW-0594">Phospholipid biosynthesis</keyword>
<keyword id="KW-1208">Phospholipid metabolism</keyword>
<keyword id="KW-0808">Transferase</keyword>
<protein>
    <recommendedName>
        <fullName evidence="1">Heptaprenylglyceryl phosphate synthase</fullName>
        <shortName evidence="1">HepGP synthase</shortName>
        <ecNumber evidence="1">2.5.1.n9</ecNumber>
    </recommendedName>
    <alternativeName>
        <fullName evidence="1">Glycerol-1-phosphate heptaprenyltransferase</fullName>
    </alternativeName>
</protein>
<organism>
    <name type="scientific">Bacillus velezensis (strain DSM 23117 / BGSC 10A6 / LMG 26770 / FZB42)</name>
    <name type="common">Bacillus amyloliquefaciens subsp. plantarum</name>
    <dbReference type="NCBI Taxonomy" id="326423"/>
    <lineage>
        <taxon>Bacteria</taxon>
        <taxon>Bacillati</taxon>
        <taxon>Bacillota</taxon>
        <taxon>Bacilli</taxon>
        <taxon>Bacillales</taxon>
        <taxon>Bacillaceae</taxon>
        <taxon>Bacillus</taxon>
        <taxon>Bacillus amyloliquefaciens group</taxon>
    </lineage>
</organism>